<organism>
    <name type="scientific">Lactobacillus helveticus (strain DPC 4571)</name>
    <dbReference type="NCBI Taxonomy" id="405566"/>
    <lineage>
        <taxon>Bacteria</taxon>
        <taxon>Bacillati</taxon>
        <taxon>Bacillota</taxon>
        <taxon>Bacilli</taxon>
        <taxon>Lactobacillales</taxon>
        <taxon>Lactobacillaceae</taxon>
        <taxon>Lactobacillus</taxon>
    </lineage>
</organism>
<feature type="chain" id="PRO_1000072706" description="Ribosomal RNA large subunit methyltransferase H">
    <location>
        <begin position="1"/>
        <end position="159"/>
    </location>
</feature>
<feature type="binding site" evidence="1">
    <location>
        <position position="108"/>
    </location>
    <ligand>
        <name>S-adenosyl-L-methionine</name>
        <dbReference type="ChEBI" id="CHEBI:59789"/>
    </ligand>
</feature>
<feature type="binding site" evidence="1">
    <location>
        <begin position="127"/>
        <end position="132"/>
    </location>
    <ligand>
        <name>S-adenosyl-L-methionine</name>
        <dbReference type="ChEBI" id="CHEBI:59789"/>
    </ligand>
</feature>
<reference key="1">
    <citation type="journal article" date="2008" name="J. Bacteriol.">
        <title>Genome sequence of Lactobacillus helveticus: an organism distinguished by selective gene loss and IS element expansion.</title>
        <authorList>
            <person name="Callanan M."/>
            <person name="Kaleta P."/>
            <person name="O'Callaghan J."/>
            <person name="O'Sullivan O."/>
            <person name="Jordan K."/>
            <person name="McAuliffe O."/>
            <person name="Sangrador-Vegas A."/>
            <person name="Slattery L."/>
            <person name="Fitzgerald G.F."/>
            <person name="Beresford T."/>
            <person name="Ross R.P."/>
        </authorList>
    </citation>
    <scope>NUCLEOTIDE SEQUENCE [LARGE SCALE GENOMIC DNA]</scope>
    <source>
        <strain>DPC 4571</strain>
    </source>
</reference>
<proteinExistence type="inferred from homology"/>
<keyword id="KW-0963">Cytoplasm</keyword>
<keyword id="KW-0489">Methyltransferase</keyword>
<keyword id="KW-0698">rRNA processing</keyword>
<keyword id="KW-0949">S-adenosyl-L-methionine</keyword>
<keyword id="KW-0808">Transferase</keyword>
<gene>
    <name evidence="1" type="primary">rlmH</name>
    <name type="ordered locus">lhv_0101</name>
</gene>
<comment type="function">
    <text evidence="1">Specifically methylates the pseudouridine at position 1915 (m3Psi1915) in 23S rRNA.</text>
</comment>
<comment type="catalytic activity">
    <reaction evidence="1">
        <text>pseudouridine(1915) in 23S rRNA + S-adenosyl-L-methionine = N(3)-methylpseudouridine(1915) in 23S rRNA + S-adenosyl-L-homocysteine + H(+)</text>
        <dbReference type="Rhea" id="RHEA:42752"/>
        <dbReference type="Rhea" id="RHEA-COMP:10221"/>
        <dbReference type="Rhea" id="RHEA-COMP:10222"/>
        <dbReference type="ChEBI" id="CHEBI:15378"/>
        <dbReference type="ChEBI" id="CHEBI:57856"/>
        <dbReference type="ChEBI" id="CHEBI:59789"/>
        <dbReference type="ChEBI" id="CHEBI:65314"/>
        <dbReference type="ChEBI" id="CHEBI:74486"/>
        <dbReference type="EC" id="2.1.1.177"/>
    </reaction>
</comment>
<comment type="subunit">
    <text evidence="1">Homodimer.</text>
</comment>
<comment type="subcellular location">
    <subcellularLocation>
        <location evidence="1">Cytoplasm</location>
    </subcellularLocation>
</comment>
<comment type="similarity">
    <text evidence="1">Belongs to the RNA methyltransferase RlmH family.</text>
</comment>
<evidence type="ECO:0000255" key="1">
    <source>
        <dbReference type="HAMAP-Rule" id="MF_00658"/>
    </source>
</evidence>
<accession>A8YWL2</accession>
<dbReference type="EC" id="2.1.1.177" evidence="1"/>
<dbReference type="EMBL" id="CP000517">
    <property type="protein sequence ID" value="ABX26374.1"/>
    <property type="molecule type" value="Genomic_DNA"/>
</dbReference>
<dbReference type="RefSeq" id="WP_003628556.1">
    <property type="nucleotide sequence ID" value="NC_010080.1"/>
</dbReference>
<dbReference type="SMR" id="A8YWL2"/>
<dbReference type="KEGG" id="lhe:lhv_0101"/>
<dbReference type="eggNOG" id="COG1576">
    <property type="taxonomic scope" value="Bacteria"/>
</dbReference>
<dbReference type="HOGENOM" id="CLU_100552_0_0_9"/>
<dbReference type="Proteomes" id="UP000000790">
    <property type="component" value="Chromosome"/>
</dbReference>
<dbReference type="GO" id="GO:0005737">
    <property type="term" value="C:cytoplasm"/>
    <property type="evidence" value="ECO:0007669"/>
    <property type="project" value="UniProtKB-SubCell"/>
</dbReference>
<dbReference type="GO" id="GO:0070038">
    <property type="term" value="F:rRNA (pseudouridine-N3-)-methyltransferase activity"/>
    <property type="evidence" value="ECO:0007669"/>
    <property type="project" value="UniProtKB-UniRule"/>
</dbReference>
<dbReference type="CDD" id="cd18081">
    <property type="entry name" value="RlmH-like"/>
    <property type="match status" value="1"/>
</dbReference>
<dbReference type="Gene3D" id="3.40.1280.10">
    <property type="match status" value="1"/>
</dbReference>
<dbReference type="HAMAP" id="MF_00658">
    <property type="entry name" value="23SrRNA_methyltr_H"/>
    <property type="match status" value="1"/>
</dbReference>
<dbReference type="InterPro" id="IPR029028">
    <property type="entry name" value="Alpha/beta_knot_MTases"/>
</dbReference>
<dbReference type="InterPro" id="IPR003742">
    <property type="entry name" value="RlmH-like"/>
</dbReference>
<dbReference type="InterPro" id="IPR029026">
    <property type="entry name" value="tRNA_m1G_MTases_N"/>
</dbReference>
<dbReference type="NCBIfam" id="NF000985">
    <property type="entry name" value="PRK00103.1-3"/>
    <property type="match status" value="1"/>
</dbReference>
<dbReference type="NCBIfam" id="TIGR00246">
    <property type="entry name" value="tRNA_RlmH_YbeA"/>
    <property type="match status" value="1"/>
</dbReference>
<dbReference type="PANTHER" id="PTHR33603">
    <property type="entry name" value="METHYLTRANSFERASE"/>
    <property type="match status" value="1"/>
</dbReference>
<dbReference type="PANTHER" id="PTHR33603:SF1">
    <property type="entry name" value="RIBOSOMAL RNA LARGE SUBUNIT METHYLTRANSFERASE H"/>
    <property type="match status" value="1"/>
</dbReference>
<dbReference type="Pfam" id="PF02590">
    <property type="entry name" value="SPOUT_MTase"/>
    <property type="match status" value="1"/>
</dbReference>
<dbReference type="PIRSF" id="PIRSF004505">
    <property type="entry name" value="MT_bac"/>
    <property type="match status" value="1"/>
</dbReference>
<dbReference type="SUPFAM" id="SSF75217">
    <property type="entry name" value="alpha/beta knot"/>
    <property type="match status" value="1"/>
</dbReference>
<name>RLMH_LACH4</name>
<sequence length="159" mass="18063">MNIKIVCVGKLKEKYFKDAIAEYKKRLSRFAKVSIVQVPDEKAPEKFSAAEDERVKQIEGERILSKIKDKEYVYVTAIKGKQRSSEEFAKEIQNLATYGHSDITFVIGGSLGTSNAVNKRGDDLISFGKLTMPHQLMRVVLIEQIYRAFMINSGSPYHK</sequence>
<protein>
    <recommendedName>
        <fullName evidence="1">Ribosomal RNA large subunit methyltransferase H</fullName>
        <ecNumber evidence="1">2.1.1.177</ecNumber>
    </recommendedName>
    <alternativeName>
        <fullName evidence="1">23S rRNA (pseudouridine1915-N3)-methyltransferase</fullName>
    </alternativeName>
    <alternativeName>
        <fullName evidence="1">23S rRNA m3Psi1915 methyltransferase</fullName>
    </alternativeName>
    <alternativeName>
        <fullName evidence="1">rRNA (pseudouridine-N3-)-methyltransferase RlmH</fullName>
    </alternativeName>
</protein>